<feature type="chain" id="PRO_0000379575" description="Uncharacterized tRNA/rRNA methyltransferase MMAR_5079">
    <location>
        <begin position="1"/>
        <end position="310"/>
    </location>
</feature>
<feature type="region of interest" description="Disordered" evidence="2">
    <location>
        <begin position="1"/>
        <end position="70"/>
    </location>
</feature>
<feature type="compositionally biased region" description="Basic residues" evidence="2">
    <location>
        <begin position="49"/>
        <end position="62"/>
    </location>
</feature>
<feature type="binding site" evidence="1">
    <location>
        <position position="262"/>
    </location>
    <ligand>
        <name>S-adenosyl-L-methionine</name>
        <dbReference type="ChEBI" id="CHEBI:59789"/>
    </ligand>
</feature>
<feature type="binding site" evidence="1">
    <location>
        <position position="282"/>
    </location>
    <ligand>
        <name>S-adenosyl-L-methionine</name>
        <dbReference type="ChEBI" id="CHEBI:59789"/>
    </ligand>
</feature>
<feature type="binding site" evidence="1">
    <location>
        <position position="291"/>
    </location>
    <ligand>
        <name>S-adenosyl-L-methionine</name>
        <dbReference type="ChEBI" id="CHEBI:59789"/>
    </ligand>
</feature>
<proteinExistence type="inferred from homology"/>
<dbReference type="EC" id="2.1.1.-"/>
<dbReference type="EMBL" id="CP000854">
    <property type="protein sequence ID" value="ACC43483.1"/>
    <property type="molecule type" value="Genomic_DNA"/>
</dbReference>
<dbReference type="RefSeq" id="WP_012396601.1">
    <property type="nucleotide sequence ID" value="NC_010612.1"/>
</dbReference>
<dbReference type="SMR" id="B2HJ20"/>
<dbReference type="STRING" id="216594.MMAR_5079"/>
<dbReference type="GeneID" id="34340010"/>
<dbReference type="KEGG" id="mmi:MMAR_5079"/>
<dbReference type="eggNOG" id="COG0566">
    <property type="taxonomic scope" value="Bacteria"/>
</dbReference>
<dbReference type="HOGENOM" id="CLU_021322_0_0_11"/>
<dbReference type="OrthoDB" id="9785673at2"/>
<dbReference type="Proteomes" id="UP000001190">
    <property type="component" value="Chromosome"/>
</dbReference>
<dbReference type="GO" id="GO:0005829">
    <property type="term" value="C:cytosol"/>
    <property type="evidence" value="ECO:0007669"/>
    <property type="project" value="TreeGrafter"/>
</dbReference>
<dbReference type="GO" id="GO:0003723">
    <property type="term" value="F:RNA binding"/>
    <property type="evidence" value="ECO:0007669"/>
    <property type="project" value="InterPro"/>
</dbReference>
<dbReference type="GO" id="GO:0008173">
    <property type="term" value="F:RNA methyltransferase activity"/>
    <property type="evidence" value="ECO:0007669"/>
    <property type="project" value="InterPro"/>
</dbReference>
<dbReference type="GO" id="GO:0032259">
    <property type="term" value="P:methylation"/>
    <property type="evidence" value="ECO:0007669"/>
    <property type="project" value="UniProtKB-KW"/>
</dbReference>
<dbReference type="GO" id="GO:0006396">
    <property type="term" value="P:RNA processing"/>
    <property type="evidence" value="ECO:0007669"/>
    <property type="project" value="InterPro"/>
</dbReference>
<dbReference type="CDD" id="cd18103">
    <property type="entry name" value="SpoU-like_RlmB"/>
    <property type="match status" value="1"/>
</dbReference>
<dbReference type="FunFam" id="3.30.1330.30:FF:000024">
    <property type="entry name" value="Putative tRNA/rRNA methyltransferase"/>
    <property type="match status" value="1"/>
</dbReference>
<dbReference type="FunFam" id="3.40.1280.10:FF:000015">
    <property type="entry name" value="Putative tRNA/rRNA methyltransferase"/>
    <property type="match status" value="1"/>
</dbReference>
<dbReference type="Gene3D" id="3.30.1330.30">
    <property type="match status" value="1"/>
</dbReference>
<dbReference type="Gene3D" id="3.40.1280.10">
    <property type="match status" value="1"/>
</dbReference>
<dbReference type="InterPro" id="IPR029028">
    <property type="entry name" value="Alpha/beta_knot_MTases"/>
</dbReference>
<dbReference type="InterPro" id="IPR029064">
    <property type="entry name" value="Ribosomal_eL30-like_sf"/>
</dbReference>
<dbReference type="InterPro" id="IPR004441">
    <property type="entry name" value="rRNA_MeTrfase_TrmH"/>
</dbReference>
<dbReference type="InterPro" id="IPR001537">
    <property type="entry name" value="SpoU_MeTrfase"/>
</dbReference>
<dbReference type="InterPro" id="IPR013123">
    <property type="entry name" value="SpoU_subst-bd"/>
</dbReference>
<dbReference type="InterPro" id="IPR029026">
    <property type="entry name" value="tRNA_m1G_MTases_N"/>
</dbReference>
<dbReference type="NCBIfam" id="TIGR00186">
    <property type="entry name" value="rRNA_methyl_3"/>
    <property type="match status" value="1"/>
</dbReference>
<dbReference type="PANTHER" id="PTHR46429">
    <property type="entry name" value="23S RRNA (GUANOSINE-2'-O-)-METHYLTRANSFERASE RLMB"/>
    <property type="match status" value="1"/>
</dbReference>
<dbReference type="PANTHER" id="PTHR46429:SF1">
    <property type="entry name" value="23S RRNA (GUANOSINE-2'-O-)-METHYLTRANSFERASE RLMB"/>
    <property type="match status" value="1"/>
</dbReference>
<dbReference type="Pfam" id="PF00588">
    <property type="entry name" value="SpoU_methylase"/>
    <property type="match status" value="1"/>
</dbReference>
<dbReference type="Pfam" id="PF08032">
    <property type="entry name" value="SpoU_sub_bind"/>
    <property type="match status" value="1"/>
</dbReference>
<dbReference type="SMART" id="SM00967">
    <property type="entry name" value="SpoU_sub_bind"/>
    <property type="match status" value="1"/>
</dbReference>
<dbReference type="SUPFAM" id="SSF75217">
    <property type="entry name" value="alpha/beta knot"/>
    <property type="match status" value="1"/>
</dbReference>
<dbReference type="SUPFAM" id="SSF55315">
    <property type="entry name" value="L30e-like"/>
    <property type="match status" value="1"/>
</dbReference>
<name>Y5079_MYCMM</name>
<protein>
    <recommendedName>
        <fullName>Uncharacterized tRNA/rRNA methyltransferase MMAR_5079</fullName>
        <ecNumber>2.1.1.-</ecNumber>
    </recommendedName>
</protein>
<gene>
    <name type="ordered locus">MMAR_5079</name>
</gene>
<organism>
    <name type="scientific">Mycobacterium marinum (strain ATCC BAA-535 / M)</name>
    <dbReference type="NCBI Taxonomy" id="216594"/>
    <lineage>
        <taxon>Bacteria</taxon>
        <taxon>Bacillati</taxon>
        <taxon>Actinomycetota</taxon>
        <taxon>Actinomycetes</taxon>
        <taxon>Mycobacteriales</taxon>
        <taxon>Mycobacteriaceae</taxon>
        <taxon>Mycobacterium</taxon>
        <taxon>Mycobacterium ulcerans group</taxon>
    </lineage>
</organism>
<evidence type="ECO:0000250" key="1"/>
<evidence type="ECO:0000256" key="2">
    <source>
        <dbReference type="SAM" id="MobiDB-lite"/>
    </source>
</evidence>
<evidence type="ECO:0000305" key="3"/>
<sequence>MAGNSQRRGAIRKSGTKKGTSVGSGGQRRRGLEGRGPTPPAHMRPNHPAAKRAKAQQRRPARGRTDETETVLGRNPVLECLRAGVPSTALYVALGVEADERLTESVSRAADSGIPILEVPRTDLDRMTANHLHQGIALQVPPYNYAHPDDLLAAALDTPPALLVALDNISDPRNLGAIVRSVAAFGGHGVLIPQRRSASVTAVAWRTSAGAAARMPVARATNLTRALKDWADRGVRVVGLDAGGDTAIDDLDGSDPIVVVVGSEGKGLSRLVRQTCDEVVSVPMAGPTESLNASVAAGVVLAEIARQRRT</sequence>
<accession>B2HJ20</accession>
<comment type="similarity">
    <text evidence="3">Belongs to the class IV-like SAM-binding methyltransferase superfamily. RNA methyltransferase TrmH family.</text>
</comment>
<reference key="1">
    <citation type="journal article" date="2008" name="Genome Res.">
        <title>Insights from the complete genome sequence of Mycobacterium marinum on the evolution of Mycobacterium tuberculosis.</title>
        <authorList>
            <person name="Stinear T.P."/>
            <person name="Seemann T."/>
            <person name="Harrison P.F."/>
            <person name="Jenkin G.A."/>
            <person name="Davies J.K."/>
            <person name="Johnson P.D."/>
            <person name="Abdellah Z."/>
            <person name="Arrowsmith C."/>
            <person name="Chillingworth T."/>
            <person name="Churcher C."/>
            <person name="Clarke K."/>
            <person name="Cronin A."/>
            <person name="Davis P."/>
            <person name="Goodhead I."/>
            <person name="Holroyd N."/>
            <person name="Jagels K."/>
            <person name="Lord A."/>
            <person name="Moule S."/>
            <person name="Mungall K."/>
            <person name="Norbertczak H."/>
            <person name="Quail M.A."/>
            <person name="Rabbinowitsch E."/>
            <person name="Walker D."/>
            <person name="White B."/>
            <person name="Whitehead S."/>
            <person name="Small P.L."/>
            <person name="Brosch R."/>
            <person name="Ramakrishnan L."/>
            <person name="Fischbach M.A."/>
            <person name="Parkhill J."/>
            <person name="Cole S.T."/>
        </authorList>
    </citation>
    <scope>NUCLEOTIDE SEQUENCE [LARGE SCALE GENOMIC DNA]</scope>
    <source>
        <strain>ATCC BAA-535 / M</strain>
    </source>
</reference>
<keyword id="KW-0489">Methyltransferase</keyword>
<keyword id="KW-1185">Reference proteome</keyword>
<keyword id="KW-0949">S-adenosyl-L-methionine</keyword>
<keyword id="KW-0808">Transferase</keyword>